<comment type="function">
    <text evidence="2">Hydrolyzes linear guanidino acids to form urea and the corresponding amines. Displays specificity for substrates having a negatively charged head group and short chains including taurocyamine, guanidino propanoic and butanoic acids. May protect cells by detoxifying potentially harmful amounts of guanidino acids. Metabolizes L-arginine with low efficiency.</text>
</comment>
<comment type="catalytic activity">
    <reaction evidence="2">
        <text>3-guanidinopropanoate + H2O = urea + beta-alanine</text>
        <dbReference type="Rhea" id="RHEA:16029"/>
        <dbReference type="ChEBI" id="CHEBI:15377"/>
        <dbReference type="ChEBI" id="CHEBI:16199"/>
        <dbReference type="ChEBI" id="CHEBI:57593"/>
        <dbReference type="ChEBI" id="CHEBI:57966"/>
        <dbReference type="EC" id="3.5.3.17"/>
    </reaction>
    <physiologicalReaction direction="left-to-right" evidence="2">
        <dbReference type="Rhea" id="RHEA:16030"/>
    </physiologicalReaction>
</comment>
<comment type="catalytic activity">
    <reaction evidence="2">
        <text>4-guanidinobutanoate + H2O = urea + 4-aminobutanoate</text>
        <dbReference type="Rhea" id="RHEA:19501"/>
        <dbReference type="ChEBI" id="CHEBI:15377"/>
        <dbReference type="ChEBI" id="CHEBI:16199"/>
        <dbReference type="ChEBI" id="CHEBI:57486"/>
        <dbReference type="ChEBI" id="CHEBI:59888"/>
        <dbReference type="EC" id="3.5.3.7"/>
    </reaction>
    <physiologicalReaction direction="left-to-right" evidence="2">
        <dbReference type="Rhea" id="RHEA:19502"/>
    </physiologicalReaction>
</comment>
<comment type="catalytic activity">
    <reaction evidence="2">
        <text>taurocyamine + H2O = urea + taurine</text>
        <dbReference type="Rhea" id="RHEA:75931"/>
        <dbReference type="ChEBI" id="CHEBI:15377"/>
        <dbReference type="ChEBI" id="CHEBI:16199"/>
        <dbReference type="ChEBI" id="CHEBI:58064"/>
        <dbReference type="ChEBI" id="CHEBI:507393"/>
        <dbReference type="EC" id="3.5.3.17"/>
    </reaction>
    <physiologicalReaction direction="left-to-right" evidence="2">
        <dbReference type="Rhea" id="RHEA:75932"/>
    </physiologicalReaction>
</comment>
<comment type="catalytic activity">
    <reaction evidence="2">
        <text>L-arginine + H2O = urea + L-ornithine</text>
        <dbReference type="Rhea" id="RHEA:20569"/>
        <dbReference type="ChEBI" id="CHEBI:15377"/>
        <dbReference type="ChEBI" id="CHEBI:16199"/>
        <dbReference type="ChEBI" id="CHEBI:32682"/>
        <dbReference type="ChEBI" id="CHEBI:46911"/>
        <dbReference type="EC" id="3.5.3.1"/>
    </reaction>
    <physiologicalReaction direction="left-to-right" evidence="2">
        <dbReference type="Rhea" id="RHEA:20570"/>
    </physiologicalReaction>
</comment>
<comment type="cofactor">
    <cofactor evidence="4">
        <name>Mn(2+)</name>
        <dbReference type="ChEBI" id="CHEBI:29035"/>
    </cofactor>
</comment>
<comment type="pathway">
    <text evidence="2">Nitrogen metabolism; urea cycle; L-ornithine and urea from L-arginine: step 1/1.</text>
</comment>
<comment type="subcellular location">
    <subcellularLocation>
        <location evidence="1">Mitochondrion</location>
    </subcellularLocation>
</comment>
<comment type="tissue specificity">
    <text evidence="6">Detected only in liver.</text>
</comment>
<comment type="similarity">
    <text evidence="4">Belongs to the arginase family. Agmatinase subfamily.</text>
</comment>
<comment type="caution">
    <text evidence="8">May have little or no activity due to the lack of several residues essential for manganese binding and catalytic activity.</text>
</comment>
<name>GDAH_MOUSE</name>
<reference key="1">
    <citation type="journal article" date="2009" name="PLoS Biol.">
        <title>Lineage-specific biology revealed by a finished genome assembly of the mouse.</title>
        <authorList>
            <person name="Church D.M."/>
            <person name="Goodstadt L."/>
            <person name="Hillier L.W."/>
            <person name="Zody M.C."/>
            <person name="Goldstein S."/>
            <person name="She X."/>
            <person name="Bult C.J."/>
            <person name="Agarwala R."/>
            <person name="Cherry J.L."/>
            <person name="DiCuccio M."/>
            <person name="Hlavina W."/>
            <person name="Kapustin Y."/>
            <person name="Meric P."/>
            <person name="Maglott D."/>
            <person name="Birtle Z."/>
            <person name="Marques A.C."/>
            <person name="Graves T."/>
            <person name="Zhou S."/>
            <person name="Teague B."/>
            <person name="Potamousis K."/>
            <person name="Churas C."/>
            <person name="Place M."/>
            <person name="Herschleb J."/>
            <person name="Runnheim R."/>
            <person name="Forrest D."/>
            <person name="Amos-Landgraf J."/>
            <person name="Schwartz D.C."/>
            <person name="Cheng Z."/>
            <person name="Lindblad-Toh K."/>
            <person name="Eichler E.E."/>
            <person name="Ponting C.P."/>
        </authorList>
    </citation>
    <scope>NUCLEOTIDE SEQUENCE [LARGE SCALE GENOMIC DNA]</scope>
    <source>
        <strain>C57BL/6J</strain>
    </source>
</reference>
<reference key="2">
    <citation type="journal article" date="2004" name="Genome Res.">
        <title>The status, quality, and expansion of the NIH full-length cDNA project: the Mammalian Gene Collection (MGC).</title>
        <authorList>
            <consortium name="The MGC Project Team"/>
        </authorList>
    </citation>
    <scope>NUCLEOTIDE SEQUENCE [LARGE SCALE MRNA]</scope>
</reference>
<reference key="3">
    <citation type="journal article" date="2002" name="Mol. Genet. Metab.">
        <title>Cloning and characterization of human agmatinase.</title>
        <authorList>
            <person name="Iyer R.K."/>
            <person name="Kim H.K."/>
            <person name="Tsoa R.W."/>
            <person name="Grody W.W."/>
            <person name="Cederbaum S.D."/>
        </authorList>
    </citation>
    <scope>TISSUE SPECIFICITY</scope>
</reference>
<reference key="4">
    <citation type="journal article" date="2003" name="Ann. N. Y. Acad. Sci.">
        <title>Vertebrate agmatinases: what role do they play in agmatine catabolism?</title>
        <authorList>
            <person name="Morris S.M. Jr."/>
        </authorList>
    </citation>
    <scope>POTENTIAL LACK OF CATALYTIC ACTIVITY</scope>
</reference>
<reference key="5">
    <citation type="journal article" date="2010" name="Cell">
        <title>A tissue-specific atlas of mouse protein phosphorylation and expression.</title>
        <authorList>
            <person name="Huttlin E.L."/>
            <person name="Jedrychowski M.P."/>
            <person name="Elias J.E."/>
            <person name="Goswami T."/>
            <person name="Rad R."/>
            <person name="Beausoleil S.A."/>
            <person name="Villen J."/>
            <person name="Haas W."/>
            <person name="Sowa M.E."/>
            <person name="Gygi S.P."/>
        </authorList>
    </citation>
    <scope>IDENTIFICATION BY MASS SPECTROMETRY [LARGE SCALE ANALYSIS]</scope>
    <source>
        <tissue>Liver</tissue>
    </source>
</reference>
<reference key="6">
    <citation type="journal article" date="2013" name="Mol. Cell">
        <title>SIRT5-mediated lysine desuccinylation impacts diverse metabolic pathways.</title>
        <authorList>
            <person name="Park J."/>
            <person name="Chen Y."/>
            <person name="Tishkoff D.X."/>
            <person name="Peng C."/>
            <person name="Tan M."/>
            <person name="Dai L."/>
            <person name="Xie Z."/>
            <person name="Zhang Y."/>
            <person name="Zwaans B.M."/>
            <person name="Skinner M.E."/>
            <person name="Lombard D.B."/>
            <person name="Zhao Y."/>
        </authorList>
    </citation>
    <scope>SUCCINYLATION [LARGE SCALE ANALYSIS] AT LYS-223</scope>
    <scope>IDENTIFICATION BY MASS SPECTROMETRY [LARGE SCALE ANALYSIS]</scope>
    <source>
        <tissue>Liver</tissue>
    </source>
</reference>
<reference key="7">
    <citation type="journal article" date="2013" name="Proc. Natl. Acad. Sci. U.S.A.">
        <title>Label-free quantitative proteomics of the lysine acetylome in mitochondria identifies substrates of SIRT3 in metabolic pathways.</title>
        <authorList>
            <person name="Rardin M.J."/>
            <person name="Newman J.C."/>
            <person name="Held J.M."/>
            <person name="Cusack M.P."/>
            <person name="Sorensen D.J."/>
            <person name="Li B."/>
            <person name="Schilling B."/>
            <person name="Mooney S.D."/>
            <person name="Kahn C.R."/>
            <person name="Verdin E."/>
            <person name="Gibson B.W."/>
        </authorList>
    </citation>
    <scope>ACETYLATION [LARGE SCALE ANALYSIS] AT LYS-199 AND LYS-223</scope>
    <scope>IDENTIFICATION BY MASS SPECTROMETRY [LARGE SCALE ANALYSIS]</scope>
    <source>
        <tissue>Liver</tissue>
    </source>
</reference>
<evidence type="ECO:0000250" key="1"/>
<evidence type="ECO:0000250" key="2">
    <source>
        <dbReference type="UniProtKB" id="Q9BSE5"/>
    </source>
</evidence>
<evidence type="ECO:0000255" key="3"/>
<evidence type="ECO:0000255" key="4">
    <source>
        <dbReference type="PROSITE-ProRule" id="PRU00742"/>
    </source>
</evidence>
<evidence type="ECO:0000256" key="5">
    <source>
        <dbReference type="SAM" id="MobiDB-lite"/>
    </source>
</evidence>
<evidence type="ECO:0000269" key="6">
    <source>
    </source>
</evidence>
<evidence type="ECO:0000305" key="7"/>
<evidence type="ECO:0000305" key="8">
    <source>
    </source>
</evidence>
<evidence type="ECO:0007744" key="9">
    <source>
    </source>
</evidence>
<evidence type="ECO:0007744" key="10">
    <source>
    </source>
</evidence>
<organism>
    <name type="scientific">Mus musculus</name>
    <name type="common">Mouse</name>
    <dbReference type="NCBI Taxonomy" id="10090"/>
    <lineage>
        <taxon>Eukaryota</taxon>
        <taxon>Metazoa</taxon>
        <taxon>Chordata</taxon>
        <taxon>Craniata</taxon>
        <taxon>Vertebrata</taxon>
        <taxon>Euteleostomi</taxon>
        <taxon>Mammalia</taxon>
        <taxon>Eutheria</taxon>
        <taxon>Euarchontoglires</taxon>
        <taxon>Glires</taxon>
        <taxon>Rodentia</taxon>
        <taxon>Myomorpha</taxon>
        <taxon>Muroidea</taxon>
        <taxon>Muridae</taxon>
        <taxon>Murinae</taxon>
        <taxon>Mus</taxon>
        <taxon>Mus</taxon>
    </lineage>
</organism>
<dbReference type="EC" id="3.5.3.-" evidence="2"/>
<dbReference type="EC" id="3.5.3.1" evidence="2"/>
<dbReference type="EC" id="3.5.3.7" evidence="2"/>
<dbReference type="EC" id="3.5.3.17" evidence="2"/>
<dbReference type="EMBL" id="AL928577">
    <property type="status" value="NOT_ANNOTATED_CDS"/>
    <property type="molecule type" value="Genomic_DNA"/>
</dbReference>
<dbReference type="EMBL" id="BC115693">
    <property type="protein sequence ID" value="AAI15694.1"/>
    <property type="molecule type" value="mRNA"/>
</dbReference>
<dbReference type="CCDS" id="CCDS38941.1"/>
<dbReference type="RefSeq" id="NP_001074877.1">
    <property type="nucleotide sequence ID" value="NM_001081408.1"/>
</dbReference>
<dbReference type="SMR" id="A2AS89"/>
<dbReference type="FunCoup" id="A2AS89">
    <property type="interactions" value="73"/>
</dbReference>
<dbReference type="STRING" id="10090.ENSMUSP00000040853"/>
<dbReference type="iPTMnet" id="A2AS89"/>
<dbReference type="PhosphoSitePlus" id="A2AS89"/>
<dbReference type="SwissPalm" id="A2AS89"/>
<dbReference type="jPOST" id="A2AS89"/>
<dbReference type="PaxDb" id="10090-ENSMUSP00000040853"/>
<dbReference type="PeptideAtlas" id="A2AS89"/>
<dbReference type="ProteomicsDB" id="261568"/>
<dbReference type="Antibodypedia" id="14379">
    <property type="antibodies" value="92 antibodies from 20 providers"/>
</dbReference>
<dbReference type="Ensembl" id="ENSMUST00000038161.5">
    <property type="protein sequence ID" value="ENSMUSP00000040853.5"/>
    <property type="gene ID" value="ENSMUSG00000040706.5"/>
</dbReference>
<dbReference type="GeneID" id="75986"/>
<dbReference type="KEGG" id="mmu:75986"/>
<dbReference type="UCSC" id="uc008vpe.1">
    <property type="organism name" value="mouse"/>
</dbReference>
<dbReference type="AGR" id="MGI:1923236"/>
<dbReference type="CTD" id="79814"/>
<dbReference type="MGI" id="MGI:1923236">
    <property type="gene designation" value="Agmat"/>
</dbReference>
<dbReference type="VEuPathDB" id="HostDB:ENSMUSG00000040706"/>
<dbReference type="eggNOG" id="KOG2964">
    <property type="taxonomic scope" value="Eukaryota"/>
</dbReference>
<dbReference type="GeneTree" id="ENSGT00950000183195"/>
<dbReference type="HOGENOM" id="CLU_039478_0_0_1"/>
<dbReference type="InParanoid" id="A2AS89"/>
<dbReference type="OMA" id="YELTTIM"/>
<dbReference type="OrthoDB" id="9992747at2759"/>
<dbReference type="PhylomeDB" id="A2AS89"/>
<dbReference type="TreeFam" id="TF328612"/>
<dbReference type="Reactome" id="R-MMU-351143">
    <property type="pathway name" value="Agmatine biosynthesis"/>
</dbReference>
<dbReference type="UniPathway" id="UPA00158">
    <property type="reaction ID" value="UER00270"/>
</dbReference>
<dbReference type="BioGRID-ORCS" id="75986">
    <property type="hits" value="4 hits in 79 CRISPR screens"/>
</dbReference>
<dbReference type="ChiTaRS" id="Agmat">
    <property type="organism name" value="mouse"/>
</dbReference>
<dbReference type="PRO" id="PR:A2AS89"/>
<dbReference type="Proteomes" id="UP000000589">
    <property type="component" value="Chromosome 4"/>
</dbReference>
<dbReference type="RNAct" id="A2AS89">
    <property type="molecule type" value="protein"/>
</dbReference>
<dbReference type="Bgee" id="ENSMUSG00000040706">
    <property type="expression patterns" value="Expressed in left lobe of liver and 96 other cell types or tissues"/>
</dbReference>
<dbReference type="GO" id="GO:0005739">
    <property type="term" value="C:mitochondrion"/>
    <property type="evidence" value="ECO:0007669"/>
    <property type="project" value="UniProtKB-SubCell"/>
</dbReference>
<dbReference type="GO" id="GO:0008783">
    <property type="term" value="F:agmatinase activity"/>
    <property type="evidence" value="ECO:0007669"/>
    <property type="project" value="UniProtKB-EC"/>
</dbReference>
<dbReference type="GO" id="GO:0004053">
    <property type="term" value="F:arginase activity"/>
    <property type="evidence" value="ECO:0000250"/>
    <property type="project" value="UniProtKB"/>
</dbReference>
<dbReference type="GO" id="GO:0047971">
    <property type="term" value="F:guanidinobutyrase activity"/>
    <property type="evidence" value="ECO:0000250"/>
    <property type="project" value="UniProtKB"/>
</dbReference>
<dbReference type="GO" id="GO:0047972">
    <property type="term" value="F:guanidinopropionase activity"/>
    <property type="evidence" value="ECO:0000250"/>
    <property type="project" value="UniProtKB"/>
</dbReference>
<dbReference type="GO" id="GO:0046872">
    <property type="term" value="F:metal ion binding"/>
    <property type="evidence" value="ECO:0007669"/>
    <property type="project" value="UniProtKB-KW"/>
</dbReference>
<dbReference type="GO" id="GO:0006525">
    <property type="term" value="P:arginine metabolic process"/>
    <property type="evidence" value="ECO:0007669"/>
    <property type="project" value="UniProtKB-KW"/>
</dbReference>
<dbReference type="GO" id="GO:0000050">
    <property type="term" value="P:urea cycle"/>
    <property type="evidence" value="ECO:0007669"/>
    <property type="project" value="UniProtKB-UniPathway"/>
</dbReference>
<dbReference type="CDD" id="cd11592">
    <property type="entry name" value="Agmatinase_PAH"/>
    <property type="match status" value="1"/>
</dbReference>
<dbReference type="FunFam" id="3.40.800.10:FF:000002">
    <property type="entry name" value="Agmatinase"/>
    <property type="match status" value="1"/>
</dbReference>
<dbReference type="Gene3D" id="3.40.800.10">
    <property type="entry name" value="Ureohydrolase domain"/>
    <property type="match status" value="1"/>
</dbReference>
<dbReference type="InterPro" id="IPR005925">
    <property type="entry name" value="Agmatinase-rel"/>
</dbReference>
<dbReference type="InterPro" id="IPR006035">
    <property type="entry name" value="Ureohydrolase"/>
</dbReference>
<dbReference type="InterPro" id="IPR023696">
    <property type="entry name" value="Ureohydrolase_dom_sf"/>
</dbReference>
<dbReference type="NCBIfam" id="TIGR01230">
    <property type="entry name" value="agmatinase"/>
    <property type="match status" value="1"/>
</dbReference>
<dbReference type="PANTHER" id="PTHR11358">
    <property type="entry name" value="ARGINASE/AGMATINASE"/>
    <property type="match status" value="1"/>
</dbReference>
<dbReference type="PANTHER" id="PTHR11358:SF26">
    <property type="entry name" value="GUANIDINO ACID HYDROLASE, MITOCHONDRIAL"/>
    <property type="match status" value="1"/>
</dbReference>
<dbReference type="Pfam" id="PF00491">
    <property type="entry name" value="Arginase"/>
    <property type="match status" value="1"/>
</dbReference>
<dbReference type="PIRSF" id="PIRSF036979">
    <property type="entry name" value="Arginase"/>
    <property type="match status" value="1"/>
</dbReference>
<dbReference type="PRINTS" id="PR00116">
    <property type="entry name" value="ARGINASE"/>
</dbReference>
<dbReference type="SUPFAM" id="SSF52768">
    <property type="entry name" value="Arginase/deacetylase"/>
    <property type="match status" value="1"/>
</dbReference>
<dbReference type="PROSITE" id="PS51409">
    <property type="entry name" value="ARGINASE_2"/>
    <property type="match status" value="1"/>
</dbReference>
<sequence>MLRLLRSSWARGLGSGVATWRPSAGLFRPGCPGIRQASGASDTPHHQSPSSESPVQPVGVGVCSMMRLPLQSSPEGLDAAFIGVPLDTGTSNRPGARFGPCRIREESLMLGAVNPSTGALPFQSLRVADLGNVNVNLYNLQDSCLLIREAYQNVLAAGCIPLTLGGDQTITYPILQAVAKEHGPVGLVHVGAHTNTTDKPREEKVYHRTPFRRSVDEGLLDSKRVVQIGIRGSSRTLDPYRYSRSQGFRVVLAEDCWMKSLVPLMAEVRQQMGGKPLYISFAIDALDPAYAPGTGTPEIAGLTPSQALEIIRGCQGLNVVGCDLVEVSPPYDLSGNTALLAANLLFEMLCALPKVTTV</sequence>
<keyword id="KW-0007">Acetylation</keyword>
<keyword id="KW-0056">Arginine metabolism</keyword>
<keyword id="KW-0378">Hydrolase</keyword>
<keyword id="KW-0464">Manganese</keyword>
<keyword id="KW-0479">Metal-binding</keyword>
<keyword id="KW-0496">Mitochondrion</keyword>
<keyword id="KW-1185">Reference proteome</keyword>
<keyword id="KW-0809">Transit peptide</keyword>
<protein>
    <recommendedName>
        <fullName evidence="2">Guanidino acid hydrolase, mitochondrial</fullName>
        <ecNumber evidence="2">3.5.3.-</ecNumber>
    </recommendedName>
    <alternativeName>
        <fullName evidence="2">Arginase, mitochondrial</fullName>
        <ecNumber evidence="2">3.5.3.1</ecNumber>
    </alternativeName>
    <alternativeName>
        <fullName>Guanidinobutyrase, mitochondrial</fullName>
        <ecNumber evidence="2">3.5.3.7</ecNumber>
    </alternativeName>
    <alternativeName>
        <fullName>Guanidinopropionase, mitochondrial</fullName>
        <ecNumber evidence="2">3.5.3.17</ecNumber>
    </alternativeName>
</protein>
<proteinExistence type="evidence at protein level"/>
<gene>
    <name type="primary">Agmat</name>
    <name evidence="2" type="synonym">Gdah</name>
</gene>
<accession>A2AS89</accession>
<accession>Q14BN7</accession>
<feature type="transit peptide" description="Mitochondrion" evidence="3">
    <location>
        <begin position="1"/>
        <end position="36"/>
    </location>
</feature>
<feature type="chain" id="PRO_0000320072" description="Guanidino acid hydrolase, mitochondrial">
    <location>
        <begin position="37"/>
        <end position="358"/>
    </location>
</feature>
<feature type="region of interest" description="Disordered" evidence="5">
    <location>
        <begin position="31"/>
        <end position="56"/>
    </location>
</feature>
<feature type="compositionally biased region" description="Low complexity" evidence="5">
    <location>
        <begin position="46"/>
        <end position="56"/>
    </location>
</feature>
<feature type="binding site" evidence="4">
    <location>
        <position position="168"/>
    </location>
    <ligand>
        <name>Mn(2+)</name>
        <dbReference type="ChEBI" id="CHEBI:29035"/>
        <label>1</label>
    </ligand>
</feature>
<feature type="binding site" evidence="4">
    <location>
        <position position="193"/>
    </location>
    <ligand>
        <name>Mn(2+)</name>
        <dbReference type="ChEBI" id="CHEBI:29035"/>
        <label>2</label>
    </ligand>
</feature>
<feature type="binding site" evidence="4">
    <location>
        <position position="284"/>
    </location>
    <ligand>
        <name>Mn(2+)</name>
        <dbReference type="ChEBI" id="CHEBI:29035"/>
        <label>2</label>
    </ligand>
</feature>
<feature type="modified residue" description="N6-acetyllysine" evidence="9">
    <location>
        <position position="199"/>
    </location>
</feature>
<feature type="modified residue" description="N6-acetyllysine; alternate" evidence="9">
    <location>
        <position position="223"/>
    </location>
</feature>
<feature type="modified residue" description="N6-succinyllysine; alternate" evidence="10">
    <location>
        <position position="223"/>
    </location>
</feature>
<feature type="sequence conflict" description="In Ref. 2; AAI15694." evidence="7" ref="2">
    <original>L</original>
    <variation>R</variation>
    <location>
        <position position="145"/>
    </location>
</feature>